<comment type="function">
    <text evidence="1">NDH shuttles electrons from NAD(P)H:plastoquinone, via FMN and iron-sulfur (Fe-S) centers, to quinones in the photosynthetic chain and possibly in a chloroplast respiratory chain. The immediate electron acceptor for the enzyme in this species is believed to be plastoquinone. Couples the redox reaction to proton translocation, and thus conserves the redox energy in a proton gradient.</text>
</comment>
<comment type="catalytic activity">
    <reaction evidence="1">
        <text>a plastoquinone + NADH + (n+1) H(+)(in) = a plastoquinol + NAD(+) + n H(+)(out)</text>
        <dbReference type="Rhea" id="RHEA:42608"/>
        <dbReference type="Rhea" id="RHEA-COMP:9561"/>
        <dbReference type="Rhea" id="RHEA-COMP:9562"/>
        <dbReference type="ChEBI" id="CHEBI:15378"/>
        <dbReference type="ChEBI" id="CHEBI:17757"/>
        <dbReference type="ChEBI" id="CHEBI:57540"/>
        <dbReference type="ChEBI" id="CHEBI:57945"/>
        <dbReference type="ChEBI" id="CHEBI:62192"/>
    </reaction>
</comment>
<comment type="catalytic activity">
    <reaction evidence="1">
        <text>a plastoquinone + NADPH + (n+1) H(+)(in) = a plastoquinol + NADP(+) + n H(+)(out)</text>
        <dbReference type="Rhea" id="RHEA:42612"/>
        <dbReference type="Rhea" id="RHEA-COMP:9561"/>
        <dbReference type="Rhea" id="RHEA-COMP:9562"/>
        <dbReference type="ChEBI" id="CHEBI:15378"/>
        <dbReference type="ChEBI" id="CHEBI:17757"/>
        <dbReference type="ChEBI" id="CHEBI:57783"/>
        <dbReference type="ChEBI" id="CHEBI:58349"/>
        <dbReference type="ChEBI" id="CHEBI:62192"/>
    </reaction>
</comment>
<comment type="subunit">
    <text evidence="1">NDH is composed of at least 16 different subunits, 5 of which are encoded in the nucleus.</text>
</comment>
<comment type="subcellular location">
    <subcellularLocation>
        <location evidence="1">Plastid</location>
        <location evidence="1">Chloroplast thylakoid membrane</location>
        <topology evidence="1">Peripheral membrane protein</topology>
        <orientation evidence="1">Stromal side</orientation>
    </subcellularLocation>
</comment>
<comment type="similarity">
    <text evidence="1">Belongs to the complex I 49 kDa subunit family.</text>
</comment>
<accession>A0ZZ91</accession>
<protein>
    <recommendedName>
        <fullName evidence="1">NAD(P)H-quinone oxidoreductase subunit H, chloroplastic</fullName>
        <ecNumber evidence="1">7.1.1.-</ecNumber>
    </recommendedName>
    <alternativeName>
        <fullName>NAD(P)H dehydrogenase subunit H</fullName>
    </alternativeName>
    <alternativeName>
        <fullName evidence="1">NADH-plastoquinone oxidoreductase 49 kDa subunit</fullName>
    </alternativeName>
    <alternativeName>
        <fullName evidence="1">NADH-plastoquinone oxidoreductase subunit H</fullName>
    </alternativeName>
</protein>
<geneLocation type="chloroplast"/>
<dbReference type="EC" id="7.1.1.-" evidence="1"/>
<dbReference type="EMBL" id="AP009123">
    <property type="protein sequence ID" value="BAF41303.1"/>
    <property type="molecule type" value="Genomic_DNA"/>
</dbReference>
<dbReference type="RefSeq" id="YP_913242.1">
    <property type="nucleotide sequence ID" value="NC_008641.1"/>
</dbReference>
<dbReference type="SMR" id="A0ZZ91"/>
<dbReference type="GeneID" id="4575201"/>
<dbReference type="GO" id="GO:0009535">
    <property type="term" value="C:chloroplast thylakoid membrane"/>
    <property type="evidence" value="ECO:0007669"/>
    <property type="project" value="UniProtKB-SubCell"/>
</dbReference>
<dbReference type="GO" id="GO:0051287">
    <property type="term" value="F:NAD binding"/>
    <property type="evidence" value="ECO:0007669"/>
    <property type="project" value="InterPro"/>
</dbReference>
<dbReference type="GO" id="GO:0016655">
    <property type="term" value="F:oxidoreductase activity, acting on NAD(P)H, quinone or similar compound as acceptor"/>
    <property type="evidence" value="ECO:0007669"/>
    <property type="project" value="UniProtKB-UniRule"/>
</dbReference>
<dbReference type="GO" id="GO:0048038">
    <property type="term" value="F:quinone binding"/>
    <property type="evidence" value="ECO:0007669"/>
    <property type="project" value="UniProtKB-KW"/>
</dbReference>
<dbReference type="GO" id="GO:0019684">
    <property type="term" value="P:photosynthesis, light reaction"/>
    <property type="evidence" value="ECO:0007669"/>
    <property type="project" value="UniProtKB-UniRule"/>
</dbReference>
<dbReference type="FunFam" id="1.10.645.10:FF:000003">
    <property type="entry name" value="NAD(P)H-quinone oxidoreductase subunit H, chloroplastic"/>
    <property type="match status" value="1"/>
</dbReference>
<dbReference type="Gene3D" id="1.10.645.10">
    <property type="entry name" value="Cytochrome-c3 Hydrogenase, chain B"/>
    <property type="match status" value="1"/>
</dbReference>
<dbReference type="HAMAP" id="MF_01358">
    <property type="entry name" value="NDH1_NuoD"/>
    <property type="match status" value="1"/>
</dbReference>
<dbReference type="InterPro" id="IPR001135">
    <property type="entry name" value="NADH_Q_OxRdtase_suD"/>
</dbReference>
<dbReference type="InterPro" id="IPR014029">
    <property type="entry name" value="NADH_UbQ_OxRdtase_49kDa_CS"/>
</dbReference>
<dbReference type="InterPro" id="IPR022885">
    <property type="entry name" value="NDH1_su_D/H"/>
</dbReference>
<dbReference type="InterPro" id="IPR029014">
    <property type="entry name" value="NiFe-Hase_large"/>
</dbReference>
<dbReference type="NCBIfam" id="NF004739">
    <property type="entry name" value="PRK06075.1"/>
    <property type="match status" value="1"/>
</dbReference>
<dbReference type="NCBIfam" id="NF005649">
    <property type="entry name" value="PRK07415.1"/>
    <property type="match status" value="1"/>
</dbReference>
<dbReference type="PANTHER" id="PTHR11993:SF10">
    <property type="entry name" value="NADH DEHYDROGENASE [UBIQUINONE] IRON-SULFUR PROTEIN 2, MITOCHONDRIAL"/>
    <property type="match status" value="1"/>
</dbReference>
<dbReference type="PANTHER" id="PTHR11993">
    <property type="entry name" value="NADH-UBIQUINONE OXIDOREDUCTASE 49 KDA SUBUNIT"/>
    <property type="match status" value="1"/>
</dbReference>
<dbReference type="Pfam" id="PF00346">
    <property type="entry name" value="Complex1_49kDa"/>
    <property type="match status" value="1"/>
</dbReference>
<dbReference type="SUPFAM" id="SSF56762">
    <property type="entry name" value="HydB/Nqo4-like"/>
    <property type="match status" value="1"/>
</dbReference>
<dbReference type="PROSITE" id="PS00535">
    <property type="entry name" value="COMPLEX1_49K"/>
    <property type="match status" value="1"/>
</dbReference>
<reference key="1">
    <citation type="journal article" date="2006" name="Genes Genet. Syst.">
        <title>Complete nucleotide sequence of the cotton (Gossypium barbadense L.) chloroplast genome with a comparative analysis of sequences among 9 dicot plants.</title>
        <authorList>
            <person name="Ibrahim R.I.H."/>
            <person name="Azuma J."/>
            <person name="Sakamoto M."/>
        </authorList>
    </citation>
    <scope>NUCLEOTIDE SEQUENCE [LARGE SCALE GENOMIC DNA]</scope>
</reference>
<organism>
    <name type="scientific">Gossypium barbadense</name>
    <name type="common">Sea Island cotton</name>
    <name type="synonym">Hibiscus barbadensis</name>
    <dbReference type="NCBI Taxonomy" id="3634"/>
    <lineage>
        <taxon>Eukaryota</taxon>
        <taxon>Viridiplantae</taxon>
        <taxon>Streptophyta</taxon>
        <taxon>Embryophyta</taxon>
        <taxon>Tracheophyta</taxon>
        <taxon>Spermatophyta</taxon>
        <taxon>Magnoliopsida</taxon>
        <taxon>eudicotyledons</taxon>
        <taxon>Gunneridae</taxon>
        <taxon>Pentapetalae</taxon>
        <taxon>rosids</taxon>
        <taxon>malvids</taxon>
        <taxon>Malvales</taxon>
        <taxon>Malvaceae</taxon>
        <taxon>Malvoideae</taxon>
        <taxon>Gossypium</taxon>
    </lineage>
</organism>
<proteinExistence type="inferred from homology"/>
<feature type="chain" id="PRO_0000357990" description="NAD(P)H-quinone oxidoreductase subunit H, chloroplastic">
    <location>
        <begin position="1"/>
        <end position="393"/>
    </location>
</feature>
<keyword id="KW-0150">Chloroplast</keyword>
<keyword id="KW-0472">Membrane</keyword>
<keyword id="KW-0520">NAD</keyword>
<keyword id="KW-0521">NADP</keyword>
<keyword id="KW-0934">Plastid</keyword>
<keyword id="KW-0618">Plastoquinone</keyword>
<keyword id="KW-0874">Quinone</keyword>
<keyword id="KW-0793">Thylakoid</keyword>
<keyword id="KW-1278">Translocase</keyword>
<keyword id="KW-0813">Transport</keyword>
<gene>
    <name evidence="1" type="primary">ndhH</name>
</gene>
<sequence length="393" mass="45521">MNLSATEKDLMIVNMGPHHPSMHGVLRLIVTLDGEDVVDCEPILGYLHRGMEKIAENRTIIQYLPYVTRWDYLATMFTEAITVNGPEQLGNIQVPKRASYIRVIMLELSRIASHLLWLGPFMADIGAQTPFFYIFRERELVYDLFEAATGMRMMHNYFRIGGVAADLPYGWLDKCLDFCDYFLTGIVEYQKLITRNPIFLERVEGIGVIGGEEAINWGLSGPMLRASGIKWDLRKVDHYECYDEFDWEIQWQKEGDSLARYLVRISEMTESIKIIQQALEGIPGGPYENLEIRCFDRERDPEWNDFEYRFISIKPSPTFELPRQELYARMEAPKGELGIFLIGDQSGFPWRWKIRPPGFINLQILPQLVKRMKLADIMTILGSIDIIMGEVDR</sequence>
<name>NDHH_GOSBA</name>
<evidence type="ECO:0000255" key="1">
    <source>
        <dbReference type="HAMAP-Rule" id="MF_01358"/>
    </source>
</evidence>